<gene>
    <name evidence="1" type="primary">gatB</name>
    <name type="ordered locus">syc1386_c</name>
</gene>
<sequence>MTATAPVKTEYEAVIGLETHVQLGTATKIFSNASTEFGADPNTHIDPVVLGLPGTLPVLNQKVLEYAVKAGLALNCQIAPYSKFDRKQYFYPDLPKNYQISQYDLPIAEHGWIEIEVAEKGKEPYTKKIGVTRLHMEEDAGKLVHAGSDRLAGSTHSLVDYNRAGVALAEIVSEPDLRTGKEAAEYAQELRRIMRYLGVSDGNMAEGSLRCDVNISIRPKGTEKFGTKVEIKYMNSFNAIQRAIEFEIERQIRCLETGEPIVQETRLWDEGKQVTKSMRSKEGSSDYRYFPEPDLGPIEVSETQRETWRSELPELPAQKRHRYAEQYGLSAYDARVLTDEKSTADYYEATVAAGADAKQAANWLMGDIAAYVNANKLLVSDLPLQPQDLAELVNLIEAGTISGKIAKEILPELLEKGGSPKAIVEAKGLTQISDPAQIEALVDELLAAHPTELEQFRAGKTKLQGFFVGQLMKKTGGRVDPKLSNQILNQKLKG</sequence>
<keyword id="KW-0067">ATP-binding</keyword>
<keyword id="KW-0436">Ligase</keyword>
<keyword id="KW-0547">Nucleotide-binding</keyword>
<keyword id="KW-0648">Protein biosynthesis</keyword>
<protein>
    <recommendedName>
        <fullName evidence="1">Aspartyl/glutamyl-tRNA(Asn/Gln) amidotransferase subunit B</fullName>
        <shortName evidence="1">Asp/Glu-ADT subunit B</shortName>
        <ecNumber evidence="1">6.3.5.-</ecNumber>
    </recommendedName>
</protein>
<comment type="function">
    <text evidence="1">Allows the formation of correctly charged Asn-tRNA(Asn) or Gln-tRNA(Gln) through the transamidation of misacylated Asp-tRNA(Asn) or Glu-tRNA(Gln) in organisms which lack either or both of asparaginyl-tRNA or glutaminyl-tRNA synthetases. The reaction takes place in the presence of glutamine and ATP through an activated phospho-Asp-tRNA(Asn) or phospho-Glu-tRNA(Gln).</text>
</comment>
<comment type="catalytic activity">
    <reaction evidence="1">
        <text>L-glutamyl-tRNA(Gln) + L-glutamine + ATP + H2O = L-glutaminyl-tRNA(Gln) + L-glutamate + ADP + phosphate + H(+)</text>
        <dbReference type="Rhea" id="RHEA:17521"/>
        <dbReference type="Rhea" id="RHEA-COMP:9681"/>
        <dbReference type="Rhea" id="RHEA-COMP:9684"/>
        <dbReference type="ChEBI" id="CHEBI:15377"/>
        <dbReference type="ChEBI" id="CHEBI:15378"/>
        <dbReference type="ChEBI" id="CHEBI:29985"/>
        <dbReference type="ChEBI" id="CHEBI:30616"/>
        <dbReference type="ChEBI" id="CHEBI:43474"/>
        <dbReference type="ChEBI" id="CHEBI:58359"/>
        <dbReference type="ChEBI" id="CHEBI:78520"/>
        <dbReference type="ChEBI" id="CHEBI:78521"/>
        <dbReference type="ChEBI" id="CHEBI:456216"/>
    </reaction>
</comment>
<comment type="catalytic activity">
    <reaction evidence="1">
        <text>L-aspartyl-tRNA(Asn) + L-glutamine + ATP + H2O = L-asparaginyl-tRNA(Asn) + L-glutamate + ADP + phosphate + 2 H(+)</text>
        <dbReference type="Rhea" id="RHEA:14513"/>
        <dbReference type="Rhea" id="RHEA-COMP:9674"/>
        <dbReference type="Rhea" id="RHEA-COMP:9677"/>
        <dbReference type="ChEBI" id="CHEBI:15377"/>
        <dbReference type="ChEBI" id="CHEBI:15378"/>
        <dbReference type="ChEBI" id="CHEBI:29985"/>
        <dbReference type="ChEBI" id="CHEBI:30616"/>
        <dbReference type="ChEBI" id="CHEBI:43474"/>
        <dbReference type="ChEBI" id="CHEBI:58359"/>
        <dbReference type="ChEBI" id="CHEBI:78515"/>
        <dbReference type="ChEBI" id="CHEBI:78516"/>
        <dbReference type="ChEBI" id="CHEBI:456216"/>
    </reaction>
</comment>
<comment type="subunit">
    <text evidence="1">Heterotrimer of A, B and C subunits.</text>
</comment>
<comment type="similarity">
    <text evidence="1">Belongs to the GatB/GatE family. GatB subfamily.</text>
</comment>
<evidence type="ECO:0000255" key="1">
    <source>
        <dbReference type="HAMAP-Rule" id="MF_00121"/>
    </source>
</evidence>
<feature type="chain" id="PRO_0000241289" description="Aspartyl/glutamyl-tRNA(Asn/Gln) amidotransferase subunit B">
    <location>
        <begin position="1"/>
        <end position="494"/>
    </location>
</feature>
<organism>
    <name type="scientific">Synechococcus sp. (strain ATCC 27144 / PCC 6301 / SAUG 1402/1)</name>
    <name type="common">Anacystis nidulans</name>
    <dbReference type="NCBI Taxonomy" id="269084"/>
    <lineage>
        <taxon>Bacteria</taxon>
        <taxon>Bacillati</taxon>
        <taxon>Cyanobacteriota</taxon>
        <taxon>Cyanophyceae</taxon>
        <taxon>Synechococcales</taxon>
        <taxon>Synechococcaceae</taxon>
        <taxon>Synechococcus</taxon>
    </lineage>
</organism>
<proteinExistence type="inferred from homology"/>
<name>GATB_SYNP6</name>
<reference key="1">
    <citation type="journal article" date="2007" name="Photosyn. Res.">
        <title>Complete nucleotide sequence of the freshwater unicellular cyanobacterium Synechococcus elongatus PCC 6301 chromosome: gene content and organization.</title>
        <authorList>
            <person name="Sugita C."/>
            <person name="Ogata K."/>
            <person name="Shikata M."/>
            <person name="Jikuya H."/>
            <person name="Takano J."/>
            <person name="Furumichi M."/>
            <person name="Kanehisa M."/>
            <person name="Omata T."/>
            <person name="Sugiura M."/>
            <person name="Sugita M."/>
        </authorList>
    </citation>
    <scope>NUCLEOTIDE SEQUENCE [LARGE SCALE GENOMIC DNA]</scope>
    <source>
        <strain>ATCC 27144 / PCC 6301 / SAUG 1402/1</strain>
    </source>
</reference>
<accession>Q5N294</accession>
<dbReference type="EC" id="6.3.5.-" evidence="1"/>
<dbReference type="EMBL" id="AP008231">
    <property type="protein sequence ID" value="BAD79576.1"/>
    <property type="molecule type" value="Genomic_DNA"/>
</dbReference>
<dbReference type="RefSeq" id="WP_011243698.1">
    <property type="nucleotide sequence ID" value="NC_006576.1"/>
</dbReference>
<dbReference type="SMR" id="Q5N294"/>
<dbReference type="KEGG" id="syc:syc1386_c"/>
<dbReference type="eggNOG" id="COG0064">
    <property type="taxonomic scope" value="Bacteria"/>
</dbReference>
<dbReference type="Proteomes" id="UP000001175">
    <property type="component" value="Chromosome"/>
</dbReference>
<dbReference type="GO" id="GO:0050566">
    <property type="term" value="F:asparaginyl-tRNA synthase (glutamine-hydrolyzing) activity"/>
    <property type="evidence" value="ECO:0007669"/>
    <property type="project" value="RHEA"/>
</dbReference>
<dbReference type="GO" id="GO:0005524">
    <property type="term" value="F:ATP binding"/>
    <property type="evidence" value="ECO:0007669"/>
    <property type="project" value="UniProtKB-KW"/>
</dbReference>
<dbReference type="GO" id="GO:0050567">
    <property type="term" value="F:glutaminyl-tRNA synthase (glutamine-hydrolyzing) activity"/>
    <property type="evidence" value="ECO:0007669"/>
    <property type="project" value="UniProtKB-UniRule"/>
</dbReference>
<dbReference type="GO" id="GO:0070681">
    <property type="term" value="P:glutaminyl-tRNAGln biosynthesis via transamidation"/>
    <property type="evidence" value="ECO:0007669"/>
    <property type="project" value="TreeGrafter"/>
</dbReference>
<dbReference type="GO" id="GO:0006412">
    <property type="term" value="P:translation"/>
    <property type="evidence" value="ECO:0007669"/>
    <property type="project" value="UniProtKB-UniRule"/>
</dbReference>
<dbReference type="FunFam" id="1.10.10.410:FF:000001">
    <property type="entry name" value="Aspartyl/glutamyl-tRNA(Asn/Gln) amidotransferase subunit B"/>
    <property type="match status" value="1"/>
</dbReference>
<dbReference type="FunFam" id="1.10.150.380:FF:000001">
    <property type="entry name" value="Aspartyl/glutamyl-tRNA(Asn/Gln) amidotransferase subunit B"/>
    <property type="match status" value="1"/>
</dbReference>
<dbReference type="Gene3D" id="1.10.10.410">
    <property type="match status" value="1"/>
</dbReference>
<dbReference type="Gene3D" id="1.10.150.380">
    <property type="entry name" value="GatB domain, N-terminal subdomain"/>
    <property type="match status" value="1"/>
</dbReference>
<dbReference type="HAMAP" id="MF_00121">
    <property type="entry name" value="GatB"/>
    <property type="match status" value="1"/>
</dbReference>
<dbReference type="InterPro" id="IPR017959">
    <property type="entry name" value="Asn/Gln-tRNA_amidoTrfase_suB/E"/>
</dbReference>
<dbReference type="InterPro" id="IPR006075">
    <property type="entry name" value="Asn/Gln-tRNA_Trfase_suB/E_cat"/>
</dbReference>
<dbReference type="InterPro" id="IPR018027">
    <property type="entry name" value="Asn/Gln_amidotransferase"/>
</dbReference>
<dbReference type="InterPro" id="IPR003789">
    <property type="entry name" value="Asn/Gln_tRNA_amidoTrase-B-like"/>
</dbReference>
<dbReference type="InterPro" id="IPR004413">
    <property type="entry name" value="GatB"/>
</dbReference>
<dbReference type="InterPro" id="IPR042114">
    <property type="entry name" value="GatB_C_1"/>
</dbReference>
<dbReference type="InterPro" id="IPR023168">
    <property type="entry name" value="GatB_Yqey_C_2"/>
</dbReference>
<dbReference type="InterPro" id="IPR017958">
    <property type="entry name" value="Gln-tRNA_amidoTrfase_suB_CS"/>
</dbReference>
<dbReference type="InterPro" id="IPR014746">
    <property type="entry name" value="Gln_synth/guanido_kin_cat_dom"/>
</dbReference>
<dbReference type="NCBIfam" id="TIGR00133">
    <property type="entry name" value="gatB"/>
    <property type="match status" value="1"/>
</dbReference>
<dbReference type="NCBIfam" id="NF004012">
    <property type="entry name" value="PRK05477.1-2"/>
    <property type="match status" value="1"/>
</dbReference>
<dbReference type="NCBIfam" id="NF004014">
    <property type="entry name" value="PRK05477.1-4"/>
    <property type="match status" value="1"/>
</dbReference>
<dbReference type="PANTHER" id="PTHR11659">
    <property type="entry name" value="GLUTAMYL-TRNA GLN AMIDOTRANSFERASE SUBUNIT B MITOCHONDRIAL AND PROKARYOTIC PET112-RELATED"/>
    <property type="match status" value="1"/>
</dbReference>
<dbReference type="PANTHER" id="PTHR11659:SF0">
    <property type="entry name" value="GLUTAMYL-TRNA(GLN) AMIDOTRANSFERASE SUBUNIT B, MITOCHONDRIAL"/>
    <property type="match status" value="1"/>
</dbReference>
<dbReference type="Pfam" id="PF02934">
    <property type="entry name" value="GatB_N"/>
    <property type="match status" value="1"/>
</dbReference>
<dbReference type="Pfam" id="PF02637">
    <property type="entry name" value="GatB_Yqey"/>
    <property type="match status" value="1"/>
</dbReference>
<dbReference type="SMART" id="SM00845">
    <property type="entry name" value="GatB_Yqey"/>
    <property type="match status" value="1"/>
</dbReference>
<dbReference type="SUPFAM" id="SSF89095">
    <property type="entry name" value="GatB/YqeY motif"/>
    <property type="match status" value="1"/>
</dbReference>
<dbReference type="SUPFAM" id="SSF55931">
    <property type="entry name" value="Glutamine synthetase/guanido kinase"/>
    <property type="match status" value="1"/>
</dbReference>
<dbReference type="PROSITE" id="PS01234">
    <property type="entry name" value="GATB"/>
    <property type="match status" value="1"/>
</dbReference>